<gene>
    <name evidence="2" type="primary">trmB</name>
    <name type="ordered locus">bbp_499</name>
</gene>
<feature type="chain" id="PRO_0000171309" description="tRNA (guanine-N(7)-)-methyltransferase">
    <location>
        <begin position="1"/>
        <end position="242"/>
    </location>
</feature>
<feature type="active site" evidence="1">
    <location>
        <position position="141"/>
    </location>
</feature>
<feature type="binding site" evidence="2">
    <location>
        <position position="66"/>
    </location>
    <ligand>
        <name>S-adenosyl-L-methionine</name>
        <dbReference type="ChEBI" id="CHEBI:59789"/>
    </ligand>
</feature>
<feature type="binding site" evidence="2">
    <location>
        <position position="91"/>
    </location>
    <ligand>
        <name>S-adenosyl-L-methionine</name>
        <dbReference type="ChEBI" id="CHEBI:59789"/>
    </ligand>
</feature>
<feature type="binding site" evidence="2">
    <location>
        <position position="118"/>
    </location>
    <ligand>
        <name>S-adenosyl-L-methionine</name>
        <dbReference type="ChEBI" id="CHEBI:59789"/>
    </ligand>
</feature>
<feature type="binding site" evidence="2">
    <location>
        <position position="141"/>
    </location>
    <ligand>
        <name>S-adenosyl-L-methionine</name>
        <dbReference type="ChEBI" id="CHEBI:59789"/>
    </ligand>
</feature>
<feature type="binding site" evidence="2">
    <location>
        <position position="145"/>
    </location>
    <ligand>
        <name>substrate</name>
    </ligand>
</feature>
<feature type="binding site" evidence="2">
    <location>
        <position position="177"/>
    </location>
    <ligand>
        <name>substrate</name>
    </ligand>
</feature>
<feature type="binding site" evidence="2">
    <location>
        <begin position="214"/>
        <end position="217"/>
    </location>
    <ligand>
        <name>substrate</name>
    </ligand>
</feature>
<keyword id="KW-0489">Methyltransferase</keyword>
<keyword id="KW-1185">Reference proteome</keyword>
<keyword id="KW-0949">S-adenosyl-L-methionine</keyword>
<keyword id="KW-0808">Transferase</keyword>
<keyword id="KW-0819">tRNA processing</keyword>
<proteinExistence type="inferred from homology"/>
<accession>Q89A46</accession>
<dbReference type="EC" id="2.1.1.33" evidence="2"/>
<dbReference type="EMBL" id="AE016826">
    <property type="protein sequence ID" value="AAO27204.1"/>
    <property type="molecule type" value="Genomic_DNA"/>
</dbReference>
<dbReference type="SMR" id="Q89A46"/>
<dbReference type="STRING" id="224915.bbp_499"/>
<dbReference type="KEGG" id="bab:bbp_499"/>
<dbReference type="eggNOG" id="COG0220">
    <property type="taxonomic scope" value="Bacteria"/>
</dbReference>
<dbReference type="HOGENOM" id="CLU_050910_0_1_6"/>
<dbReference type="OrthoDB" id="9802090at2"/>
<dbReference type="UniPathway" id="UPA00989"/>
<dbReference type="Proteomes" id="UP000000601">
    <property type="component" value="Chromosome"/>
</dbReference>
<dbReference type="GO" id="GO:0043527">
    <property type="term" value="C:tRNA methyltransferase complex"/>
    <property type="evidence" value="ECO:0007669"/>
    <property type="project" value="TreeGrafter"/>
</dbReference>
<dbReference type="GO" id="GO:0008176">
    <property type="term" value="F:tRNA (guanine(46)-N7)-methyltransferase activity"/>
    <property type="evidence" value="ECO:0007669"/>
    <property type="project" value="UniProtKB-UniRule"/>
</dbReference>
<dbReference type="Gene3D" id="3.40.50.150">
    <property type="entry name" value="Vaccinia Virus protein VP39"/>
    <property type="match status" value="1"/>
</dbReference>
<dbReference type="HAMAP" id="MF_01057">
    <property type="entry name" value="tRNA_methyltr_TrmB"/>
    <property type="match status" value="1"/>
</dbReference>
<dbReference type="InterPro" id="IPR029063">
    <property type="entry name" value="SAM-dependent_MTases_sf"/>
</dbReference>
<dbReference type="InterPro" id="IPR003358">
    <property type="entry name" value="tRNA_(Gua-N-7)_MeTrfase_Trmb"/>
</dbReference>
<dbReference type="InterPro" id="IPR055361">
    <property type="entry name" value="tRNA_methyltr_TrmB_bact"/>
</dbReference>
<dbReference type="NCBIfam" id="TIGR00091">
    <property type="entry name" value="tRNA (guanosine(46)-N7)-methyltransferase TrmB"/>
    <property type="match status" value="1"/>
</dbReference>
<dbReference type="PANTHER" id="PTHR23417">
    <property type="entry name" value="3-DEOXY-D-MANNO-OCTULOSONIC-ACID TRANSFERASE/TRNA GUANINE-N 7 - -METHYLTRANSFERASE"/>
    <property type="match status" value="1"/>
</dbReference>
<dbReference type="PANTHER" id="PTHR23417:SF14">
    <property type="entry name" value="PENTACOTRIPEPTIDE-REPEAT REGION OF PRORP DOMAIN-CONTAINING PROTEIN"/>
    <property type="match status" value="1"/>
</dbReference>
<dbReference type="Pfam" id="PF02390">
    <property type="entry name" value="Methyltransf_4"/>
    <property type="match status" value="1"/>
</dbReference>
<dbReference type="SUPFAM" id="SSF53335">
    <property type="entry name" value="S-adenosyl-L-methionine-dependent methyltransferases"/>
    <property type="match status" value="1"/>
</dbReference>
<dbReference type="PROSITE" id="PS51625">
    <property type="entry name" value="SAM_MT_TRMB"/>
    <property type="match status" value="1"/>
</dbReference>
<protein>
    <recommendedName>
        <fullName evidence="2">tRNA (guanine-N(7)-)-methyltransferase</fullName>
        <ecNumber evidence="2">2.1.1.33</ecNumber>
    </recommendedName>
    <alternativeName>
        <fullName evidence="2">tRNA (guanine(46)-N(7))-methyltransferase</fullName>
    </alternativeName>
    <alternativeName>
        <fullName evidence="2">tRNA(m7G46)-methyltransferase</fullName>
    </alternativeName>
</protein>
<comment type="function">
    <text evidence="2">Catalyzes the formation of N(7)-methylguanine at position 46 (m7G46) in tRNA.</text>
</comment>
<comment type="catalytic activity">
    <reaction evidence="2">
        <text>guanosine(46) in tRNA + S-adenosyl-L-methionine = N(7)-methylguanosine(46) in tRNA + S-adenosyl-L-homocysteine</text>
        <dbReference type="Rhea" id="RHEA:42708"/>
        <dbReference type="Rhea" id="RHEA-COMP:10188"/>
        <dbReference type="Rhea" id="RHEA-COMP:10189"/>
        <dbReference type="ChEBI" id="CHEBI:57856"/>
        <dbReference type="ChEBI" id="CHEBI:59789"/>
        <dbReference type="ChEBI" id="CHEBI:74269"/>
        <dbReference type="ChEBI" id="CHEBI:74480"/>
        <dbReference type="EC" id="2.1.1.33"/>
    </reaction>
</comment>
<comment type="pathway">
    <text evidence="2">tRNA modification; N(7)-methylguanine-tRNA biosynthesis.</text>
</comment>
<comment type="subunit">
    <text evidence="2">Monomer.</text>
</comment>
<comment type="similarity">
    <text evidence="2">Belongs to the class I-like SAM-binding methyltransferase superfamily. TrmB family.</text>
</comment>
<sequence length="242" mass="28732">MYFYLKYNINNMIMRRVRSFVSRNRKLTQNKRQFLKNYLLKYGIDFSCSYVNFNFIFNNEYPVILEIGFGTGEFLINMARKNLFSNFLGIEVYIPSILSCLRYIHKYNLPNVKVIFYDAVEVISYMISNNSLSEVYILFPDPWPKRRHHKRRIITKELLEVILKKLVFGGYLNIATDCQIYAKSILNIIENIKGYINLSNTGDYVIRSDYRLVTKFEKKGLVLGNKIFNLKFKSIFNNSNFL</sequence>
<reference key="1">
    <citation type="journal article" date="2003" name="Proc. Natl. Acad. Sci. U.S.A.">
        <title>Reductive genome evolution in Buchnera aphidicola.</title>
        <authorList>
            <person name="van Ham R.C.H.J."/>
            <person name="Kamerbeek J."/>
            <person name="Palacios C."/>
            <person name="Rausell C."/>
            <person name="Abascal F."/>
            <person name="Bastolla U."/>
            <person name="Fernandez J.M."/>
            <person name="Jimenez L."/>
            <person name="Postigo M."/>
            <person name="Silva F.J."/>
            <person name="Tamames J."/>
            <person name="Viguera E."/>
            <person name="Latorre A."/>
            <person name="Valencia A."/>
            <person name="Moran F."/>
            <person name="Moya A."/>
        </authorList>
    </citation>
    <scope>NUCLEOTIDE SEQUENCE [LARGE SCALE GENOMIC DNA]</scope>
    <source>
        <strain>Bp</strain>
    </source>
</reference>
<organism>
    <name type="scientific">Buchnera aphidicola subsp. Baizongia pistaciae (strain Bp)</name>
    <dbReference type="NCBI Taxonomy" id="224915"/>
    <lineage>
        <taxon>Bacteria</taxon>
        <taxon>Pseudomonadati</taxon>
        <taxon>Pseudomonadota</taxon>
        <taxon>Gammaproteobacteria</taxon>
        <taxon>Enterobacterales</taxon>
        <taxon>Erwiniaceae</taxon>
        <taxon>Buchnera</taxon>
    </lineage>
</organism>
<name>TRMB_BUCBP</name>
<evidence type="ECO:0000250" key="1"/>
<evidence type="ECO:0000255" key="2">
    <source>
        <dbReference type="HAMAP-Rule" id="MF_01057"/>
    </source>
</evidence>